<reference key="1">
    <citation type="submission" date="2004-03" db="EMBL/GenBank/DDBJ databases">
        <authorList>
            <person name="Chuang T.H."/>
            <person name="Ulevitch R.J."/>
        </authorList>
    </citation>
    <scope>NUCLEOTIDE SEQUENCE [MRNA] (ISOFORMS 1 AND 2)</scope>
    <source>
        <strain>BALB/cJ</strain>
        <tissue>Spleen</tissue>
    </source>
</reference>
<reference key="2">
    <citation type="journal article" date="2005" name="Science">
        <title>The transcriptional landscape of the mammalian genome.</title>
        <authorList>
            <person name="Carninci P."/>
            <person name="Kasukawa T."/>
            <person name="Katayama S."/>
            <person name="Gough J."/>
            <person name="Frith M.C."/>
            <person name="Maeda N."/>
            <person name="Oyama R."/>
            <person name="Ravasi T."/>
            <person name="Lenhard B."/>
            <person name="Wells C."/>
            <person name="Kodzius R."/>
            <person name="Shimokawa K."/>
            <person name="Bajic V.B."/>
            <person name="Brenner S.E."/>
            <person name="Batalov S."/>
            <person name="Forrest A.R."/>
            <person name="Zavolan M."/>
            <person name="Davis M.J."/>
            <person name="Wilming L.G."/>
            <person name="Aidinis V."/>
            <person name="Allen J.E."/>
            <person name="Ambesi-Impiombato A."/>
            <person name="Apweiler R."/>
            <person name="Aturaliya R.N."/>
            <person name="Bailey T.L."/>
            <person name="Bansal M."/>
            <person name="Baxter L."/>
            <person name="Beisel K.W."/>
            <person name="Bersano T."/>
            <person name="Bono H."/>
            <person name="Chalk A.M."/>
            <person name="Chiu K.P."/>
            <person name="Choudhary V."/>
            <person name="Christoffels A."/>
            <person name="Clutterbuck D.R."/>
            <person name="Crowe M.L."/>
            <person name="Dalla E."/>
            <person name="Dalrymple B.P."/>
            <person name="de Bono B."/>
            <person name="Della Gatta G."/>
            <person name="di Bernardo D."/>
            <person name="Down T."/>
            <person name="Engstrom P."/>
            <person name="Fagiolini M."/>
            <person name="Faulkner G."/>
            <person name="Fletcher C.F."/>
            <person name="Fukushima T."/>
            <person name="Furuno M."/>
            <person name="Futaki S."/>
            <person name="Gariboldi M."/>
            <person name="Georgii-Hemming P."/>
            <person name="Gingeras T.R."/>
            <person name="Gojobori T."/>
            <person name="Green R.E."/>
            <person name="Gustincich S."/>
            <person name="Harbers M."/>
            <person name="Hayashi Y."/>
            <person name="Hensch T.K."/>
            <person name="Hirokawa N."/>
            <person name="Hill D."/>
            <person name="Huminiecki L."/>
            <person name="Iacono M."/>
            <person name="Ikeo K."/>
            <person name="Iwama A."/>
            <person name="Ishikawa T."/>
            <person name="Jakt M."/>
            <person name="Kanapin A."/>
            <person name="Katoh M."/>
            <person name="Kawasawa Y."/>
            <person name="Kelso J."/>
            <person name="Kitamura H."/>
            <person name="Kitano H."/>
            <person name="Kollias G."/>
            <person name="Krishnan S.P."/>
            <person name="Kruger A."/>
            <person name="Kummerfeld S.K."/>
            <person name="Kurochkin I.V."/>
            <person name="Lareau L.F."/>
            <person name="Lazarevic D."/>
            <person name="Lipovich L."/>
            <person name="Liu J."/>
            <person name="Liuni S."/>
            <person name="McWilliam S."/>
            <person name="Madan Babu M."/>
            <person name="Madera M."/>
            <person name="Marchionni L."/>
            <person name="Matsuda H."/>
            <person name="Matsuzawa S."/>
            <person name="Miki H."/>
            <person name="Mignone F."/>
            <person name="Miyake S."/>
            <person name="Morris K."/>
            <person name="Mottagui-Tabar S."/>
            <person name="Mulder N."/>
            <person name="Nakano N."/>
            <person name="Nakauchi H."/>
            <person name="Ng P."/>
            <person name="Nilsson R."/>
            <person name="Nishiguchi S."/>
            <person name="Nishikawa S."/>
            <person name="Nori F."/>
            <person name="Ohara O."/>
            <person name="Okazaki Y."/>
            <person name="Orlando V."/>
            <person name="Pang K.C."/>
            <person name="Pavan W.J."/>
            <person name="Pavesi G."/>
            <person name="Pesole G."/>
            <person name="Petrovsky N."/>
            <person name="Piazza S."/>
            <person name="Reed J."/>
            <person name="Reid J.F."/>
            <person name="Ring B.Z."/>
            <person name="Ringwald M."/>
            <person name="Rost B."/>
            <person name="Ruan Y."/>
            <person name="Salzberg S.L."/>
            <person name="Sandelin A."/>
            <person name="Schneider C."/>
            <person name="Schoenbach C."/>
            <person name="Sekiguchi K."/>
            <person name="Semple C.A."/>
            <person name="Seno S."/>
            <person name="Sessa L."/>
            <person name="Sheng Y."/>
            <person name="Shibata Y."/>
            <person name="Shimada H."/>
            <person name="Shimada K."/>
            <person name="Silva D."/>
            <person name="Sinclair B."/>
            <person name="Sperling S."/>
            <person name="Stupka E."/>
            <person name="Sugiura K."/>
            <person name="Sultana R."/>
            <person name="Takenaka Y."/>
            <person name="Taki K."/>
            <person name="Tammoja K."/>
            <person name="Tan S.L."/>
            <person name="Tang S."/>
            <person name="Taylor M.S."/>
            <person name="Tegner J."/>
            <person name="Teichmann S.A."/>
            <person name="Ueda H.R."/>
            <person name="van Nimwegen E."/>
            <person name="Verardo R."/>
            <person name="Wei C.L."/>
            <person name="Yagi K."/>
            <person name="Yamanishi H."/>
            <person name="Zabarovsky E."/>
            <person name="Zhu S."/>
            <person name="Zimmer A."/>
            <person name="Hide W."/>
            <person name="Bult C."/>
            <person name="Grimmond S.M."/>
            <person name="Teasdale R.D."/>
            <person name="Liu E.T."/>
            <person name="Brusic V."/>
            <person name="Quackenbush J."/>
            <person name="Wahlestedt C."/>
            <person name="Mattick J.S."/>
            <person name="Hume D.A."/>
            <person name="Kai C."/>
            <person name="Sasaki D."/>
            <person name="Tomaru Y."/>
            <person name="Fukuda S."/>
            <person name="Kanamori-Katayama M."/>
            <person name="Suzuki M."/>
            <person name="Aoki J."/>
            <person name="Arakawa T."/>
            <person name="Iida J."/>
            <person name="Imamura K."/>
            <person name="Itoh M."/>
            <person name="Kato T."/>
            <person name="Kawaji H."/>
            <person name="Kawagashira N."/>
            <person name="Kawashima T."/>
            <person name="Kojima M."/>
            <person name="Kondo S."/>
            <person name="Konno H."/>
            <person name="Nakano K."/>
            <person name="Ninomiya N."/>
            <person name="Nishio T."/>
            <person name="Okada M."/>
            <person name="Plessy C."/>
            <person name="Shibata K."/>
            <person name="Shiraki T."/>
            <person name="Suzuki S."/>
            <person name="Tagami M."/>
            <person name="Waki K."/>
            <person name="Watahiki A."/>
            <person name="Okamura-Oho Y."/>
            <person name="Suzuki H."/>
            <person name="Kawai J."/>
            <person name="Hayashizaki Y."/>
        </authorList>
    </citation>
    <scope>NUCLEOTIDE SEQUENCE [LARGE SCALE MRNA] (ISOFORMS 1; 2 AND 3)</scope>
    <source>
        <strain>C57BL/6J</strain>
        <strain>NOD</strain>
        <tissue>Bone marrow macrophage</tissue>
        <tissue>Dendritic cell</tissue>
        <tissue>Melanocyte</tissue>
        <tissue>Spleen</tissue>
    </source>
</reference>
<reference key="3">
    <citation type="journal article" date="2004" name="Genome Res.">
        <title>The status, quality, and expansion of the NIH full-length cDNA project: the Mammalian Gene Collection (MGC).</title>
        <authorList>
            <consortium name="The MGC Project Team"/>
        </authorList>
    </citation>
    <scope>NUCLEOTIDE SEQUENCE [LARGE SCALE MRNA] (ISOFORM 1)</scope>
    <source>
        <strain>C57BL/6J</strain>
        <tissue>Brain</tissue>
    </source>
</reference>
<reference key="4">
    <citation type="journal article" date="1999" name="FEBS Lett.">
        <title>A family of structurally related RING finger proteins interacts specifically with the ubiquitin-conjugating enzyme UbcM4.</title>
        <authorList>
            <person name="Martinez-Noel G."/>
            <person name="Niedenthal R."/>
            <person name="Tamura T."/>
            <person name="Harbers K."/>
        </authorList>
    </citation>
    <scope>NUCLEOTIDE SEQUENCE [MRNA] OF 448-593</scope>
    <scope>INTERACTION WITH UBE2L3</scope>
    <source>
        <strain>CD-1</strain>
        <tissue>Embryo</tissue>
    </source>
</reference>
<reference key="5">
    <citation type="journal article" date="2010" name="Cell">
        <title>A tissue-specific atlas of mouse protein phosphorylation and expression.</title>
        <authorList>
            <person name="Huttlin E.L."/>
            <person name="Jedrychowski M.P."/>
            <person name="Elias J.E."/>
            <person name="Goswami T."/>
            <person name="Rad R."/>
            <person name="Beausoleil S.A."/>
            <person name="Villen J."/>
            <person name="Haas W."/>
            <person name="Sowa M.E."/>
            <person name="Gygi S.P."/>
        </authorList>
    </citation>
    <scope>PHOSPHORYLATION [LARGE SCALE ANALYSIS] AT SER-407</scope>
    <scope>IDENTIFICATION BY MASS SPECTROMETRY [LARGE SCALE ANALYSIS]</scope>
    <source>
        <tissue>Spleen</tissue>
    </source>
</reference>
<reference key="6">
    <citation type="journal article" date="2019" name="Biol. Reprod.">
        <title>RNF216 is essential for spermatogenesis and male fertility.</title>
        <authorList>
            <person name="Melnick A.F."/>
            <person name="Gao Y."/>
            <person name="Liu J."/>
            <person name="Ding D."/>
            <person name="Predom A."/>
            <person name="Kelly C."/>
            <person name="Hess R.A."/>
            <person name="Chen C."/>
        </authorList>
    </citation>
    <scope>FUNCTION</scope>
    <scope>DISRUPTION PHENOTYPE</scope>
</reference>
<reference key="7">
    <citation type="journal article" date="2021" name="FASEB J.">
        <title>RNF216 regulates meiosis and PKA stability in the testes.</title>
        <authorList>
            <person name="Li D."/>
            <person name="Li F."/>
            <person name="Meng L."/>
            <person name="Wei H."/>
            <person name="Zhang Q."/>
            <person name="Jiang F."/>
            <person name="Chen D.N."/>
            <person name="Li W."/>
            <person name="Tan Y.Q."/>
            <person name="Li J.D."/>
        </authorList>
    </citation>
    <scope>FUNCTION</scope>
    <scope>DISRUPTION PHENOTYPE</scope>
</reference>
<reference key="8">
    <citation type="journal article" date="2023" name="Dev. Growth Differ.">
        <title>RNF216 affects the stability of STAU2 in the hypothalamus.</title>
        <authorList>
            <person name="Yang H."/>
            <person name="Zhu Y."/>
            <person name="Li X."/>
            <person name="Jiang Z."/>
            <person name="Dai W."/>
        </authorList>
    </citation>
    <scope>FUNCTION</scope>
    <scope>DISRUPTION PHENOTYPE</scope>
</reference>
<feature type="chain" id="PRO_0000056294" description="E3 ubiquitin-protein ligase RNF216">
    <location>
        <begin position="1"/>
        <end position="853"/>
    </location>
</feature>
<feature type="zinc finger region" description="RING-type 1" evidence="4">
    <location>
        <begin position="503"/>
        <end position="552"/>
    </location>
</feature>
<feature type="zinc finger region" description="IBR-type" evidence="4">
    <location>
        <begin position="571"/>
        <end position="636"/>
    </location>
</feature>
<feature type="zinc finger region" description="RING-type 2; atypical" evidence="4">
    <location>
        <begin position="663"/>
        <end position="691"/>
    </location>
</feature>
<feature type="region of interest" description="Disordered" evidence="5">
    <location>
        <begin position="33"/>
        <end position="102"/>
    </location>
</feature>
<feature type="region of interest" description="Disordered" evidence="5">
    <location>
        <begin position="125"/>
        <end position="152"/>
    </location>
</feature>
<feature type="region of interest" description="Disordered" evidence="5">
    <location>
        <begin position="165"/>
        <end position="228"/>
    </location>
</feature>
<feature type="region of interest" description="TRIAD supradomain" evidence="4">
    <location>
        <begin position="499"/>
        <end position="716"/>
    </location>
</feature>
<feature type="coiled-coil region" evidence="3">
    <location>
        <begin position="463"/>
        <end position="479"/>
    </location>
</feature>
<feature type="coiled-coil region" evidence="3">
    <location>
        <begin position="725"/>
        <end position="751"/>
    </location>
</feature>
<feature type="compositionally biased region" description="Acidic residues" evidence="5">
    <location>
        <begin position="53"/>
        <end position="73"/>
    </location>
</feature>
<feature type="active site" evidence="4">
    <location>
        <position position="676"/>
    </location>
</feature>
<feature type="binding site" evidence="4">
    <location>
        <position position="503"/>
    </location>
    <ligand>
        <name>Zn(2+)</name>
        <dbReference type="ChEBI" id="CHEBI:29105"/>
        <label>1</label>
    </ligand>
</feature>
<feature type="binding site" evidence="4">
    <location>
        <position position="506"/>
    </location>
    <ligand>
        <name>Zn(2+)</name>
        <dbReference type="ChEBI" id="CHEBI:29105"/>
        <label>1</label>
    </ligand>
</feature>
<feature type="binding site" evidence="4">
    <location>
        <position position="525"/>
    </location>
    <ligand>
        <name>Zn(2+)</name>
        <dbReference type="ChEBI" id="CHEBI:29105"/>
        <label>1</label>
    </ligand>
</feature>
<feature type="binding site" evidence="4">
    <location>
        <position position="528"/>
    </location>
    <ligand>
        <name>Zn(2+)</name>
        <dbReference type="ChEBI" id="CHEBI:29105"/>
        <label>1</label>
    </ligand>
</feature>
<feature type="binding site" evidence="4">
    <location>
        <position position="593"/>
    </location>
    <ligand>
        <name>Zn(2+)</name>
        <dbReference type="ChEBI" id="CHEBI:29105"/>
        <label>2</label>
    </ligand>
</feature>
<feature type="binding site" evidence="4">
    <location>
        <position position="596"/>
    </location>
    <ligand>
        <name>Zn(2+)</name>
        <dbReference type="ChEBI" id="CHEBI:29105"/>
        <label>2</label>
    </ligand>
</feature>
<feature type="binding site" evidence="4">
    <location>
        <position position="611"/>
    </location>
    <ligand>
        <name>Zn(2+)</name>
        <dbReference type="ChEBI" id="CHEBI:29105"/>
        <label>2</label>
    </ligand>
</feature>
<feature type="binding site" evidence="4">
    <location>
        <position position="616"/>
    </location>
    <ligand>
        <name>Zn(2+)</name>
        <dbReference type="ChEBI" id="CHEBI:29105"/>
        <label>2</label>
    </ligand>
</feature>
<feature type="binding site" evidence="4">
    <location>
        <position position="621"/>
    </location>
    <ligand>
        <name>Zn(2+)</name>
        <dbReference type="ChEBI" id="CHEBI:29105"/>
        <label>3</label>
    </ligand>
</feature>
<feature type="binding site" evidence="4">
    <location>
        <position position="624"/>
    </location>
    <ligand>
        <name>Zn(2+)</name>
        <dbReference type="ChEBI" id="CHEBI:29105"/>
        <label>3</label>
    </ligand>
</feature>
<feature type="binding site" evidence="4">
    <location>
        <position position="631"/>
    </location>
    <ligand>
        <name>Zn(2+)</name>
        <dbReference type="ChEBI" id="CHEBI:29105"/>
        <label>3</label>
    </ligand>
</feature>
<feature type="binding site" evidence="4">
    <location>
        <position position="636"/>
    </location>
    <ligand>
        <name>Zn(2+)</name>
        <dbReference type="ChEBI" id="CHEBI:29105"/>
        <label>3</label>
    </ligand>
</feature>
<feature type="binding site" evidence="4">
    <location>
        <position position="663"/>
    </location>
    <ligand>
        <name>Zn(2+)</name>
        <dbReference type="ChEBI" id="CHEBI:29105"/>
        <label>4</label>
    </ligand>
</feature>
<feature type="binding site" evidence="4">
    <location>
        <position position="666"/>
    </location>
    <ligand>
        <name>Zn(2+)</name>
        <dbReference type="ChEBI" id="CHEBI:29105"/>
        <label>4</label>
    </ligand>
</feature>
<feature type="binding site" evidence="4">
    <location>
        <position position="681"/>
    </location>
    <ligand>
        <name>Zn(2+)</name>
        <dbReference type="ChEBI" id="CHEBI:29105"/>
        <label>4</label>
    </ligand>
</feature>
<feature type="binding site" evidence="4">
    <location>
        <position position="683"/>
    </location>
    <ligand>
        <name>Zn(2+)</name>
        <dbReference type="ChEBI" id="CHEBI:29105"/>
        <label>4</label>
    </ligand>
</feature>
<feature type="binding site" evidence="4">
    <location>
        <position position="688"/>
    </location>
    <ligand>
        <name>Zn(2+)</name>
        <dbReference type="ChEBI" id="CHEBI:29105"/>
        <label>5</label>
    </ligand>
</feature>
<feature type="binding site" evidence="4">
    <location>
        <position position="691"/>
    </location>
    <ligand>
        <name>Zn(2+)</name>
        <dbReference type="ChEBI" id="CHEBI:29105"/>
        <label>5</label>
    </ligand>
</feature>
<feature type="binding site" evidence="4">
    <location>
        <position position="704"/>
    </location>
    <ligand>
        <name>Zn(2+)</name>
        <dbReference type="ChEBI" id="CHEBI:29105"/>
        <label>5</label>
    </ligand>
</feature>
<feature type="binding site" evidence="4">
    <location>
        <position position="712"/>
    </location>
    <ligand>
        <name>Zn(2+)</name>
        <dbReference type="ChEBI" id="CHEBI:29105"/>
        <label>5</label>
    </ligand>
</feature>
<feature type="modified residue" description="Phosphoserine" evidence="12">
    <location>
        <position position="407"/>
    </location>
</feature>
<feature type="cross-link" description="Glycyl lysine isopeptide (Lys-Gly) (interchain with G-Cter in SUMO2)" evidence="2">
    <location>
        <position position="89"/>
    </location>
</feature>
<feature type="cross-link" description="Glycyl lysine isopeptide (Lys-Gly) (interchain with G-Cter in SUMO2)" evidence="2">
    <location>
        <position position="339"/>
    </location>
</feature>
<feature type="cross-link" description="Glycyl lysine isopeptide (Lys-Gly) (interchain with G-Cter in SUMO2)" evidence="2">
    <location>
        <position position="342"/>
    </location>
</feature>
<feature type="cross-link" description="Glycyl lysine isopeptide (Lys-Gly) (interchain with G-Cter in SUMO2)" evidence="2">
    <location>
        <position position="413"/>
    </location>
</feature>
<feature type="cross-link" description="Glycyl lysine isopeptide (Lys-Gly) (interchain with G-Cter in SUMO2)" evidence="2">
    <location>
        <position position="418"/>
    </location>
</feature>
<feature type="cross-link" description="Glycyl lysine isopeptide (Lys-Gly) (interchain with G-Cter in SUMO2)" evidence="2">
    <location>
        <position position="436"/>
    </location>
</feature>
<feature type="cross-link" description="Glycyl lysine isopeptide (Lys-Gly) (interchain with G-Cter in SUMO2)" evidence="2">
    <location>
        <position position="447"/>
    </location>
</feature>
<feature type="cross-link" description="Glycyl lysine isopeptide (Lys-Gly) (interchain with G-Cter in SUMO2)" evidence="2">
    <location>
        <position position="473"/>
    </location>
</feature>
<feature type="cross-link" description="Glycyl lysine isopeptide (Lys-Gly) (interchain with G-Cter in SUMO2)" evidence="2">
    <location>
        <position position="607"/>
    </location>
</feature>
<feature type="cross-link" description="Glycyl lysine isopeptide (Lys-Gly) (interchain with G-Cter in SUMO2)" evidence="2">
    <location>
        <position position="646"/>
    </location>
</feature>
<feature type="cross-link" description="Glycyl lysine isopeptide (Lys-Gly) (interchain with G-Cter in SUMO2)" evidence="2">
    <location>
        <position position="654"/>
    </location>
</feature>
<feature type="cross-link" description="Glycyl lysine isopeptide (Lys-Gly) (interchain with G-Cter in SUMO2)" evidence="2">
    <location>
        <position position="753"/>
    </location>
</feature>
<feature type="cross-link" description="Glycyl lysine isopeptide (Lys-Gly) (interchain with G-Cter in SUMO2)" evidence="2">
    <location>
        <position position="761"/>
    </location>
</feature>
<feature type="splice variant" id="VSP_007408" description="In isoform 2." evidence="9 10">
    <original>E</original>
    <variation>ETHKPQTSRPNLIKPAAQWQDLNRLGEERPRKSRADFEADIHNYFSFCNNSLFGSGAQ</variation>
    <location>
        <position position="66"/>
    </location>
</feature>
<feature type="splice variant" id="VSP_019293" description="In isoform 3." evidence="9">
    <original>ETCRKCQGLWKEHNGLTCEELAEKDDIKYRTSIEEKMTAARIRKCHKCGTGLIKSEGCNRMSCRCGAQMCYLCRVSINGYDHFCQHPRSPGAPCQECSRCSLWTDPTEDDEKLI</original>
    <variation>VRRTVVCVSSTLLEFGLHYAGGLCRLMHENSLPLPFMKQEKVGDGSWHSYRDEITCGNPIAKFRISRLCHFIKTGAVKMCLLLLCRIFCLLFSLSCTQIQHIHTCKLGKICMDI</variation>
    <location>
        <begin position="619"/>
        <end position="732"/>
    </location>
</feature>
<feature type="splice variant" id="VSP_019294" description="In isoform 3." evidence="9">
    <location>
        <begin position="733"/>
        <end position="853"/>
    </location>
</feature>
<feature type="sequence conflict" description="In Ref. 2; BAE32540." evidence="11" ref="2">
    <original>D</original>
    <variation>A</variation>
    <location>
        <position position="377"/>
    </location>
</feature>
<feature type="sequence conflict" description="In Ref. 2; BAE28184." evidence="11" ref="2">
    <original>K</original>
    <variation>R</variation>
    <location>
        <position position="577"/>
    </location>
</feature>
<feature type="sequence conflict" description="In Ref. 2; BAE28184." evidence="11" ref="2">
    <original>A</original>
    <variation>V</variation>
    <location>
        <position position="640"/>
    </location>
</feature>
<feature type="sequence conflict" description="In Ref. 2; BAE28184." evidence="11" ref="2">
    <original>K</original>
    <variation>E</variation>
    <location>
        <position position="646"/>
    </location>
</feature>
<sequence>MAEGNNKEEVIHLNNFPCHRGKEWMAVREGPITISDSSDEEGIPMLVTPATEQQEDDLDDDVILTEDDSEDEYGGFLDLESGKKEGEAKPGPSSKQTADDIVNPRLEQKVIILGENGLLFPESEPLEVQNQSSEDSETELLSNPGEPAASVDDQLIGEEYWLDHPYFQAPNPQPQERTNQVVPQERHSESEMGPMFFRHDFPEPAFPRPEPQQEGIPGPASPQPAHPLGELEDQQLAIDEDPGPAFPLSGPQEANLANMWEQEAAEVDQDLIPLLVKETEARFPDVASGYVEEIIHLKNYYDLNVLCNFLLENPDYPKREDRLIIHPSSSLLASQDDAKLPKIDFFDYSKLTPLDQRCFIQAADLLMADFKMLSSQDIKWALHELKGHYAITRKAFSDAIKKWQELSPETSGKRKKRKEMNQYSFIDFKFEQGNIKIEKRMFFLENKRRHCRYYDHQALLPAVKQEQEFYEQKIKEMAEHEDFLLALQMNEEQYQKDGQLIECRCCYGEFPFEELTQCADAHLFCKECLIRYAQEAVFGSGKSELSCMEGSCTCSFPTSELEKVLPQTILYKYYERKAEEEVAAAYADELVRCPSCSFPALLDSDVKRFSCPNPRCRKETCRKCQGLWKEHNGLTCEELAEKDDIKYRTSIEEKMTAARIRKCHKCGTGLIKSEGCNRMSCRCGAQMCYLCRVSINGYDHFCQHPRSPGAPCQECSRCSLWTDPTEDDEKLIEEIQKEAEEEQKRKNGENTFKRIGPPLEKPAEKVQRVEALPRPVPQNLHPQMPPYAFVHPPFPLPPVRPVFNNFPINMGPVPAPYVPPLPNVRVNYDFGHMHVPLEHNLPMHFGPQPRHRF</sequence>
<comment type="function">
    <text evidence="2 6 7 8">E3 ubiquitin ligase which accepts ubiquitin from specific E2 ubiquitin-conjugating enzymes, and then transfers it to substrates promoting their ubiquitination. Plays a role in the regulation of antiviral responses by promoting the degradation of TRAF3, TLR4 and TLR9. In turn, down-regulates NF-kappa-B and IRF3 activation as well as beta interferon production. Also participates in the regulation of autophagy by ubiquitinating BECN1 leading to its degradation and autophagy inhibition. Plays a role in ARC-dependent synaptic plasticity by mediating ARC ubiquitination resulting in its rapid proteasomal degradation (By similarity). Plays aso an essential role in spermatogenesis and male fertility (PubMed:30649198). Mechanistically, regulates meiosis by promoting the degradation of PRKACB through the ubiquitin-mediated lysosome pathway (PubMed:33724554). Modulates the gonadotropin-releasing hormone signal pathway by affecting the stability of STAU2 that is required for the microtubule-dependent transport of neuronal RNA from the cell body to the dendrite (PubMed:37439148).</text>
</comment>
<comment type="catalytic activity">
    <reaction evidence="2">
        <text>S-ubiquitinyl-[E2 ubiquitin-conjugating enzyme]-L-cysteine + [acceptor protein]-L-lysine = [E2 ubiquitin-conjugating enzyme]-L-cysteine + N(6)-ubiquitinyl-[acceptor protein]-L-lysine.</text>
        <dbReference type="EC" id="2.3.2.27"/>
    </reaction>
</comment>
<comment type="activity regulation">
    <text evidence="2">Allosterically activated by 'Lys-63'-linked di-ubiquitin.</text>
</comment>
<comment type="pathway">
    <text>Protein modification; protein ubiquitination.</text>
</comment>
<comment type="subunit">
    <text evidence="2">Interacts with UBE2L3 and to some extent with UBE2L6. Interacts with TRAF3, TLR3, TLR4, TLR5 and TLR9. Isoform 3/ZIN binds RIPK1.</text>
</comment>
<comment type="subcellular location">
    <subcellularLocation>
        <location evidence="2">Cytoplasm</location>
    </subcellularLocation>
    <subcellularLocation>
        <location evidence="2">Cytoplasmic vesicle</location>
        <location evidence="2">Clathrin-coated vesicle</location>
    </subcellularLocation>
</comment>
<comment type="alternative products">
    <event type="alternative splicing"/>
    <isoform>
        <id>P58283-1</id>
        <name>1</name>
        <name>TRIAD3A</name>
        <name>a</name>
        <sequence type="displayed"/>
    </isoform>
    <isoform>
        <id>P58283-2</id>
        <name>2</name>
        <name>TRIAD3B</name>
        <name>b</name>
        <sequence type="described" ref="VSP_007408"/>
    </isoform>
    <isoform>
        <id>P58283-3</id>
        <name>3</name>
        <sequence type="described" ref="VSP_019293 VSP_019294"/>
    </isoform>
</comment>
<comment type="domain">
    <text evidence="1">The RING-type zinc finger domain mediates binding to an E2 ubiquitin-conjugating enzyme.</text>
</comment>
<comment type="PTM">
    <text evidence="2">Auto-ubiquitinated.</text>
</comment>
<comment type="PTM">
    <text evidence="2">Phosphorylation at Ser-719 enhances acceptor ubiquitin binding and chain-type specificity towards 'Lys-63' di-ubiquitin but not di-ubiquitin with other linkage types.</text>
</comment>
<comment type="disruption phenotype">
    <text evidence="6 7 8">Deletion mutant mice are viable and grossly indistinguishable from heterozygous littermates (PubMed:30649198). However, knockout leads to infertility in male but not female mice (PubMed:30649198, PubMed:33724554). In addition, RNF216-deficiency leads to down-regulation of the gonadotropin-releasing hormone signal pathway (PubMed:37439148).</text>
</comment>
<accession>P58283</accession>
<accession>Q3U493</accession>
<accession>Q3UE56</accession>
<accession>Q3UGM3</accession>
<accession>Q68FN0</accession>
<accession>Q6P1H8</accession>
<accession>Q6PWY5</accession>
<accession>Q8BN27</accession>
<accession>Q8C1U3</accession>
<evidence type="ECO:0000250" key="1"/>
<evidence type="ECO:0000250" key="2">
    <source>
        <dbReference type="UniProtKB" id="Q9NWF9"/>
    </source>
</evidence>
<evidence type="ECO:0000255" key="3"/>
<evidence type="ECO:0000255" key="4">
    <source>
        <dbReference type="PROSITE-ProRule" id="PRU01221"/>
    </source>
</evidence>
<evidence type="ECO:0000256" key="5">
    <source>
        <dbReference type="SAM" id="MobiDB-lite"/>
    </source>
</evidence>
<evidence type="ECO:0000269" key="6">
    <source>
    </source>
</evidence>
<evidence type="ECO:0000269" key="7">
    <source>
    </source>
</evidence>
<evidence type="ECO:0000269" key="8">
    <source>
    </source>
</evidence>
<evidence type="ECO:0000303" key="9">
    <source>
    </source>
</evidence>
<evidence type="ECO:0000303" key="10">
    <source ref="1"/>
</evidence>
<evidence type="ECO:0000305" key="11"/>
<evidence type="ECO:0007744" key="12">
    <source>
    </source>
</evidence>
<organism>
    <name type="scientific">Mus musculus</name>
    <name type="common">Mouse</name>
    <dbReference type="NCBI Taxonomy" id="10090"/>
    <lineage>
        <taxon>Eukaryota</taxon>
        <taxon>Metazoa</taxon>
        <taxon>Chordata</taxon>
        <taxon>Craniata</taxon>
        <taxon>Vertebrata</taxon>
        <taxon>Euteleostomi</taxon>
        <taxon>Mammalia</taxon>
        <taxon>Eutheria</taxon>
        <taxon>Euarchontoglires</taxon>
        <taxon>Glires</taxon>
        <taxon>Rodentia</taxon>
        <taxon>Myomorpha</taxon>
        <taxon>Muroidea</taxon>
        <taxon>Muridae</taxon>
        <taxon>Murinae</taxon>
        <taxon>Mus</taxon>
        <taxon>Mus</taxon>
    </lineage>
</organism>
<proteinExistence type="evidence at protein level"/>
<keyword id="KW-0025">Alternative splicing</keyword>
<keyword id="KW-0053">Apoptosis</keyword>
<keyword id="KW-0175">Coiled coil</keyword>
<keyword id="KW-0963">Cytoplasm</keyword>
<keyword id="KW-0968">Cytoplasmic vesicle</keyword>
<keyword id="KW-1017">Isopeptide bond</keyword>
<keyword id="KW-0479">Metal-binding</keyword>
<keyword id="KW-0597">Phosphoprotein</keyword>
<keyword id="KW-1185">Reference proteome</keyword>
<keyword id="KW-0677">Repeat</keyword>
<keyword id="KW-0808">Transferase</keyword>
<keyword id="KW-0832">Ubl conjugation</keyword>
<keyword id="KW-0833">Ubl conjugation pathway</keyword>
<keyword id="KW-0862">Zinc</keyword>
<keyword id="KW-0863">Zinc-finger</keyword>
<name>RN216_MOUSE</name>
<protein>
    <recommendedName>
        <fullName>E3 ubiquitin-protein ligase RNF216</fullName>
        <ecNumber>2.3.2.27</ecNumber>
    </recommendedName>
    <alternativeName>
        <fullName>RING finger protein 216</fullName>
    </alternativeName>
    <alternativeName>
        <fullName evidence="11">RING-type E3 ubiquitin transferase RNF216</fullName>
    </alternativeName>
    <alternativeName>
        <fullName>Triad domain-containing protein 3</fullName>
    </alternativeName>
    <alternativeName>
        <fullName>UbcM4-interacting protein 83</fullName>
    </alternativeName>
    <alternativeName>
        <fullName>Ubiquitin-conjugating enzyme 7-interacting protein 1</fullName>
    </alternativeName>
</protein>
<dbReference type="EC" id="2.3.2.27"/>
<dbReference type="EMBL" id="AY572785">
    <property type="protein sequence ID" value="AAS78930.1"/>
    <property type="molecule type" value="mRNA"/>
</dbReference>
<dbReference type="EMBL" id="AY572786">
    <property type="protein sequence ID" value="AAS78931.1"/>
    <property type="molecule type" value="mRNA"/>
</dbReference>
<dbReference type="EMBL" id="AK089775">
    <property type="protein sequence ID" value="BAC40959.1"/>
    <property type="molecule type" value="mRNA"/>
</dbReference>
<dbReference type="EMBL" id="AK147861">
    <property type="protein sequence ID" value="BAE28184.1"/>
    <property type="molecule type" value="mRNA"/>
</dbReference>
<dbReference type="EMBL" id="AK149741">
    <property type="protein sequence ID" value="BAE29055.1"/>
    <property type="molecule type" value="mRNA"/>
</dbReference>
<dbReference type="EMBL" id="AK154368">
    <property type="protein sequence ID" value="BAE32540.1"/>
    <property type="molecule type" value="mRNA"/>
</dbReference>
<dbReference type="EMBL" id="BC065066">
    <property type="protein sequence ID" value="AAH65066.1"/>
    <property type="molecule type" value="mRNA"/>
</dbReference>
<dbReference type="EMBL" id="BC079540">
    <property type="protein sequence ID" value="AAH79540.1"/>
    <property type="molecule type" value="mRNA"/>
</dbReference>
<dbReference type="EMBL" id="AF361000">
    <property type="protein sequence ID" value="AAK51470.1"/>
    <property type="molecule type" value="mRNA"/>
</dbReference>
<dbReference type="CCDS" id="CCDS57400.1">
    <molecule id="P58283-2"/>
</dbReference>
<dbReference type="CCDS" id="CCDS80455.1">
    <molecule id="P58283-1"/>
</dbReference>
<dbReference type="RefSeq" id="NP_542128.2">
    <molecule id="P58283-1"/>
    <property type="nucleotide sequence ID" value="NM_080561.4"/>
</dbReference>
<dbReference type="RefSeq" id="NP_996993.1">
    <molecule id="P58283-2"/>
    <property type="nucleotide sequence ID" value="NM_207110.1"/>
</dbReference>
<dbReference type="RefSeq" id="XP_006504707.1">
    <molecule id="P58283-2"/>
    <property type="nucleotide sequence ID" value="XM_006504644.5"/>
</dbReference>
<dbReference type="RefSeq" id="XP_006504708.1">
    <molecule id="P58283-1"/>
    <property type="nucleotide sequence ID" value="XM_006504645.5"/>
</dbReference>
<dbReference type="RefSeq" id="XP_017176080.1">
    <molecule id="P58283-2"/>
    <property type="nucleotide sequence ID" value="XM_017320591.3"/>
</dbReference>
<dbReference type="RefSeq" id="XP_036020615.1">
    <molecule id="P58283-2"/>
    <property type="nucleotide sequence ID" value="XM_036164722.1"/>
</dbReference>
<dbReference type="RefSeq" id="XP_036020616.1">
    <molecule id="P58283-1"/>
    <property type="nucleotide sequence ID" value="XM_036164723.1"/>
</dbReference>
<dbReference type="SMR" id="P58283"/>
<dbReference type="BioGRID" id="223823">
    <property type="interactions" value="8"/>
</dbReference>
<dbReference type="FunCoup" id="P58283">
    <property type="interactions" value="2491"/>
</dbReference>
<dbReference type="STRING" id="10090.ENSMUSP00000143705"/>
<dbReference type="iPTMnet" id="P58283"/>
<dbReference type="PhosphoSitePlus" id="P58283"/>
<dbReference type="SwissPalm" id="P58283"/>
<dbReference type="PaxDb" id="10090-ENSMUSP00000052563"/>
<dbReference type="PeptideAtlas" id="P58283"/>
<dbReference type="ProteomicsDB" id="300541">
    <molecule id="P58283-1"/>
</dbReference>
<dbReference type="ProteomicsDB" id="300542">
    <molecule id="P58283-2"/>
</dbReference>
<dbReference type="ProteomicsDB" id="300543">
    <molecule id="P58283-3"/>
</dbReference>
<dbReference type="Pumba" id="P58283"/>
<dbReference type="Antibodypedia" id="11455">
    <property type="antibodies" value="206 antibodies from 28 providers"/>
</dbReference>
<dbReference type="DNASU" id="108086"/>
<dbReference type="Ensembl" id="ENSMUST00000053498.13">
    <molecule id="P58283-1"/>
    <property type="protein sequence ID" value="ENSMUSP00000052563.10"/>
    <property type="gene ID" value="ENSMUSG00000045078.13"/>
</dbReference>
<dbReference type="Ensembl" id="ENSMUST00000200607.5">
    <molecule id="P58283-2"/>
    <property type="protein sequence ID" value="ENSMUSP00000143705.2"/>
    <property type="gene ID" value="ENSMUSG00000045078.13"/>
</dbReference>
<dbReference type="GeneID" id="108086"/>
<dbReference type="KEGG" id="mmu:108086"/>
<dbReference type="UCSC" id="uc009ajm.2">
    <molecule id="P58283-1"/>
    <property type="organism name" value="mouse"/>
</dbReference>
<dbReference type="UCSC" id="uc009ajn.2">
    <molecule id="P58283-2"/>
    <property type="organism name" value="mouse"/>
</dbReference>
<dbReference type="UCSC" id="uc009ajo.2">
    <molecule id="P58283-3"/>
    <property type="organism name" value="mouse"/>
</dbReference>
<dbReference type="AGR" id="MGI:1344349"/>
<dbReference type="CTD" id="54476"/>
<dbReference type="MGI" id="MGI:1344349">
    <property type="gene designation" value="Rnf216"/>
</dbReference>
<dbReference type="VEuPathDB" id="HostDB:ENSMUSG00000045078"/>
<dbReference type="eggNOG" id="KOG1812">
    <property type="taxonomic scope" value="Eukaryota"/>
</dbReference>
<dbReference type="GeneTree" id="ENSGT00510000048032"/>
<dbReference type="HOGENOM" id="CLU_011576_1_0_1"/>
<dbReference type="InParanoid" id="P58283"/>
<dbReference type="OMA" id="WINHRDE"/>
<dbReference type="OrthoDB" id="51980at9989"/>
<dbReference type="PhylomeDB" id="P58283"/>
<dbReference type="TreeFam" id="TF330852"/>
<dbReference type="UniPathway" id="UPA00143"/>
<dbReference type="BioGRID-ORCS" id="108086">
    <property type="hits" value="3 hits in 79 CRISPR screens"/>
</dbReference>
<dbReference type="ChiTaRS" id="Rnf216">
    <property type="organism name" value="mouse"/>
</dbReference>
<dbReference type="PRO" id="PR:P58283"/>
<dbReference type="Proteomes" id="UP000000589">
    <property type="component" value="Chromosome 5"/>
</dbReference>
<dbReference type="RNAct" id="P58283">
    <property type="molecule type" value="protein"/>
</dbReference>
<dbReference type="Bgee" id="ENSMUSG00000045078">
    <property type="expression patterns" value="Expressed in spermatid and 230 other cell types or tissues"/>
</dbReference>
<dbReference type="ExpressionAtlas" id="P58283">
    <property type="expression patterns" value="baseline and differential"/>
</dbReference>
<dbReference type="GO" id="GO:0030136">
    <property type="term" value="C:clathrin-coated vesicle"/>
    <property type="evidence" value="ECO:0007669"/>
    <property type="project" value="UniProtKB-SubCell"/>
</dbReference>
<dbReference type="GO" id="GO:0005829">
    <property type="term" value="C:cytosol"/>
    <property type="evidence" value="ECO:0007669"/>
    <property type="project" value="Ensembl"/>
</dbReference>
<dbReference type="GO" id="GO:0098978">
    <property type="term" value="C:glutamatergic synapse"/>
    <property type="evidence" value="ECO:0007669"/>
    <property type="project" value="Ensembl"/>
</dbReference>
<dbReference type="GO" id="GO:0005654">
    <property type="term" value="C:nucleoplasm"/>
    <property type="evidence" value="ECO:0007669"/>
    <property type="project" value="Ensembl"/>
</dbReference>
<dbReference type="GO" id="GO:0098843">
    <property type="term" value="C:postsynaptic endocytic zone"/>
    <property type="evidence" value="ECO:0007669"/>
    <property type="project" value="Ensembl"/>
</dbReference>
<dbReference type="GO" id="GO:0098793">
    <property type="term" value="C:presynapse"/>
    <property type="evidence" value="ECO:0007669"/>
    <property type="project" value="Ensembl"/>
</dbReference>
<dbReference type="GO" id="GO:0098685">
    <property type="term" value="C:Schaffer collateral - CA1 synapse"/>
    <property type="evidence" value="ECO:0007669"/>
    <property type="project" value="Ensembl"/>
</dbReference>
<dbReference type="GO" id="GO:0016740">
    <property type="term" value="F:transferase activity"/>
    <property type="evidence" value="ECO:0007669"/>
    <property type="project" value="UniProtKB-KW"/>
</dbReference>
<dbReference type="GO" id="GO:0008270">
    <property type="term" value="F:zinc ion binding"/>
    <property type="evidence" value="ECO:0007669"/>
    <property type="project" value="UniProtKB-KW"/>
</dbReference>
<dbReference type="GO" id="GO:0006915">
    <property type="term" value="P:apoptotic process"/>
    <property type="evidence" value="ECO:0007669"/>
    <property type="project" value="UniProtKB-KW"/>
</dbReference>
<dbReference type="GO" id="GO:0043161">
    <property type="term" value="P:proteasome-mediated ubiquitin-dependent protein catabolic process"/>
    <property type="evidence" value="ECO:0000250"/>
    <property type="project" value="UniProtKB"/>
</dbReference>
<dbReference type="GO" id="GO:0099546">
    <property type="term" value="P:protein catabolic process, modulating synaptic transmission"/>
    <property type="evidence" value="ECO:0007669"/>
    <property type="project" value="Ensembl"/>
</dbReference>
<dbReference type="GO" id="GO:0070936">
    <property type="term" value="P:protein K48-linked ubiquitination"/>
    <property type="evidence" value="ECO:0000250"/>
    <property type="project" value="UniProtKB"/>
</dbReference>
<dbReference type="GO" id="GO:0050691">
    <property type="term" value="P:regulation of defense response to virus by host"/>
    <property type="evidence" value="ECO:0000250"/>
    <property type="project" value="UniProtKB"/>
</dbReference>
<dbReference type="GO" id="GO:0032648">
    <property type="term" value="P:regulation of interferon-beta production"/>
    <property type="evidence" value="ECO:0000250"/>
    <property type="project" value="UniProtKB"/>
</dbReference>
<dbReference type="GO" id="GO:0099149">
    <property type="term" value="P:regulation of postsynaptic neurotransmitter receptor internalization"/>
    <property type="evidence" value="ECO:0007669"/>
    <property type="project" value="Ensembl"/>
</dbReference>
<dbReference type="CDD" id="cd20339">
    <property type="entry name" value="BRcat_RBR_RNF216"/>
    <property type="match status" value="1"/>
</dbReference>
<dbReference type="CDD" id="cd20353">
    <property type="entry name" value="Rcat_RBR_RNF216"/>
    <property type="match status" value="1"/>
</dbReference>
<dbReference type="CDD" id="cd16630">
    <property type="entry name" value="RING-HC_RBR_RNF216"/>
    <property type="match status" value="1"/>
</dbReference>
<dbReference type="FunFam" id="1.20.120.1750:FF:000016">
    <property type="entry name" value="E3 ubiquitin-protein ligase RNF216 isoform X1"/>
    <property type="match status" value="1"/>
</dbReference>
<dbReference type="FunFam" id="3.30.40.10:FF:000249">
    <property type="entry name" value="E3 ubiquitin-protein ligase RNF216 isoform X1"/>
    <property type="match status" value="1"/>
</dbReference>
<dbReference type="Gene3D" id="1.20.120.1750">
    <property type="match status" value="1"/>
</dbReference>
<dbReference type="Gene3D" id="3.30.40.10">
    <property type="entry name" value="Zinc/RING finger domain, C3HC4 (zinc finger)"/>
    <property type="match status" value="1"/>
</dbReference>
<dbReference type="InterPro" id="IPR047545">
    <property type="entry name" value="BRcat_RBR_RNF216"/>
</dbReference>
<dbReference type="InterPro" id="IPR002867">
    <property type="entry name" value="IBR_dom"/>
</dbReference>
<dbReference type="InterPro" id="IPR051628">
    <property type="entry name" value="LUBAC_E3_Ligases"/>
</dbReference>
<dbReference type="InterPro" id="IPR047546">
    <property type="entry name" value="Rcat_RBR_RNF216"/>
</dbReference>
<dbReference type="InterPro" id="IPR047544">
    <property type="entry name" value="RING-HC_RBR_RNF216"/>
</dbReference>
<dbReference type="InterPro" id="IPR044066">
    <property type="entry name" value="TRIAD_supradom"/>
</dbReference>
<dbReference type="InterPro" id="IPR013083">
    <property type="entry name" value="Znf_RING/FYVE/PHD"/>
</dbReference>
<dbReference type="PANTHER" id="PTHR22770:SF47">
    <property type="entry name" value="E3 UBIQUITIN-PROTEIN LIGASE RNF216"/>
    <property type="match status" value="1"/>
</dbReference>
<dbReference type="PANTHER" id="PTHR22770">
    <property type="entry name" value="UBIQUITIN CONJUGATING ENZYME 7 INTERACTING PROTEIN-RELATED"/>
    <property type="match status" value="1"/>
</dbReference>
<dbReference type="Pfam" id="PF22191">
    <property type="entry name" value="IBR_1"/>
    <property type="match status" value="1"/>
</dbReference>
<dbReference type="SMART" id="SM00647">
    <property type="entry name" value="IBR"/>
    <property type="match status" value="2"/>
</dbReference>
<dbReference type="SUPFAM" id="SSF57850">
    <property type="entry name" value="RING/U-box"/>
    <property type="match status" value="3"/>
</dbReference>
<dbReference type="PROSITE" id="PS51873">
    <property type="entry name" value="TRIAD"/>
    <property type="match status" value="1"/>
</dbReference>
<gene>
    <name type="primary">Rnf216</name>
    <name type="synonym">Triad3</name>
    <name type="synonym">Ubce7ip1</name>
    <name type="synonym">Uip83</name>
    <name type="synonym">Zin</name>
</gene>